<evidence type="ECO:0000250" key="1"/>
<evidence type="ECO:0000255" key="2">
    <source>
        <dbReference type="PROSITE-ProRule" id="PRU00366"/>
    </source>
</evidence>
<evidence type="ECO:0000269" key="3">
    <source>
    </source>
</evidence>
<evidence type="ECO:0000269" key="4">
    <source>
    </source>
</evidence>
<evidence type="ECO:0000269" key="5">
    <source>
    </source>
</evidence>
<evidence type="ECO:0000269" key="6">
    <source>
    </source>
</evidence>
<evidence type="ECO:0000269" key="7">
    <source>
    </source>
</evidence>
<evidence type="ECO:0000269" key="8">
    <source ref="2"/>
</evidence>
<evidence type="ECO:0000305" key="9"/>
<comment type="function">
    <text evidence="3 4 7 8">Acts as a transcriptional activator. Binds to the GCC-box pathogenesis-related promoter element. Involved in the regulation of gene expression by stress factors and by components of stress signal transduction pathways mediated by ethylene, that seems to depend on a protein kinase/phosphatase cascade, and to be influenced by methyl-jasmonate.</text>
</comment>
<comment type="subcellular location">
    <subcellularLocation>
        <location evidence="2 4">Nucleus</location>
    </subcellularLocation>
</comment>
<comment type="tissue specificity">
    <text evidence="5 7">Expressed in roots. Not expressed in cell culture.</text>
</comment>
<comment type="induction">
    <text evidence="3 6 7 8">Strongly induced by ethephon (ethylene-releasing compound) in buds and in leaves. Also strongly induced by cycloheximide, mechanical stimuli. Wounding leads to a both local and systemic expression, independently of ethylene, and through a de-novo-protein-synthesis-independent regulation. Wound induction is reduced by methyl-jasmonate. Induction by purified xylanase from Trichoderma viride (TvX) and another elicitor from Phytophthora infestans (PiE), that appears to be mediated by a protein kinase cascade, and to be negatively regulated by protein phosphatases.</text>
</comment>
<comment type="domain">
    <text evidence="1">The AP2/ERF domain binds specifically to the 5'-GCCGCC-3' motif. The affinity of this binding is higher if the seventh amino-acid of this domain is basic (By similarity).</text>
</comment>
<comment type="similarity">
    <text evidence="9">Belongs to the ethylene-response factor family. Class 3 subfamily.</text>
</comment>
<comment type="caution">
    <text evidence="9">Was named ERF4 but it corresponds to Arabidopsis ERF5.</text>
</comment>
<proteinExistence type="evidence at transcript level"/>
<name>ERF5_TOBAC</name>
<gene>
    <name type="primary">ERF5</name>
    <name type="synonym">ERF-4</name>
    <name type="synonym">ERF4</name>
</gene>
<sequence>MASPQENCTTLDLIRQHLLDDNVFMEHYCPQPILYSQSSSSSESLNSIASELNNETFSFEPTLKYADTAQSSNLDISSFFNNSKTEFDSFEFETKPNVSAARISSNSPKQTSFKERKPSLNIAIPMKQQEVVQKVEVVPTEKKHYRGVRQRPWGKFAAEIRDPNRKGTRVWLGTFDTAIEAAKAYDRAAFKLRGSKAIVNFPLEVANFKQQDNEILQPANSGRKRMRETENEEIVIKKEVKREERVPAAAAPLTPSSWSAIWEGEDGKGIFEVPPLSPLSPHMAYSQLVMI</sequence>
<feature type="chain" id="PRO_0000112565" description="Ethylene-responsive transcription factor 5">
    <location>
        <begin position="1"/>
        <end position="291"/>
    </location>
</feature>
<feature type="DNA-binding region" description="AP2/ERF" evidence="2">
    <location>
        <begin position="144"/>
        <end position="202"/>
    </location>
</feature>
<dbReference type="EMBL" id="D38125">
    <property type="protein sequence ID" value="BAA07323.1"/>
    <property type="molecule type" value="mRNA"/>
</dbReference>
<dbReference type="PIR" id="T02434">
    <property type="entry name" value="T02434"/>
</dbReference>
<dbReference type="RefSeq" id="NP_001312428.1">
    <property type="nucleotide sequence ID" value="NM_001325499.1"/>
</dbReference>
<dbReference type="SMR" id="Q40478"/>
<dbReference type="STRING" id="4097.Q40478"/>
<dbReference type="PaxDb" id="4097-Q40478"/>
<dbReference type="GeneID" id="107790518"/>
<dbReference type="KEGG" id="nta:107790518"/>
<dbReference type="OMA" id="WSTIWDE"/>
<dbReference type="OrthoDB" id="674504at2759"/>
<dbReference type="Proteomes" id="UP000084051">
    <property type="component" value="Unplaced"/>
</dbReference>
<dbReference type="GO" id="GO:0005634">
    <property type="term" value="C:nucleus"/>
    <property type="evidence" value="ECO:0007669"/>
    <property type="project" value="UniProtKB-SubCell"/>
</dbReference>
<dbReference type="GO" id="GO:0003700">
    <property type="term" value="F:DNA-binding transcription factor activity"/>
    <property type="evidence" value="ECO:0007669"/>
    <property type="project" value="InterPro"/>
</dbReference>
<dbReference type="GO" id="GO:0000976">
    <property type="term" value="F:transcription cis-regulatory region binding"/>
    <property type="evidence" value="ECO:0007669"/>
    <property type="project" value="UniProtKB-ARBA"/>
</dbReference>
<dbReference type="GO" id="GO:0006952">
    <property type="term" value="P:defense response"/>
    <property type="evidence" value="ECO:0007669"/>
    <property type="project" value="UniProtKB-KW"/>
</dbReference>
<dbReference type="GO" id="GO:0009873">
    <property type="term" value="P:ethylene-activated signaling pathway"/>
    <property type="evidence" value="ECO:0007669"/>
    <property type="project" value="UniProtKB-KW"/>
</dbReference>
<dbReference type="CDD" id="cd00018">
    <property type="entry name" value="AP2"/>
    <property type="match status" value="1"/>
</dbReference>
<dbReference type="FunFam" id="3.30.730.10:FF:000001">
    <property type="entry name" value="Ethylene-responsive transcription factor 2"/>
    <property type="match status" value="1"/>
</dbReference>
<dbReference type="Gene3D" id="3.30.730.10">
    <property type="entry name" value="AP2/ERF domain"/>
    <property type="match status" value="1"/>
</dbReference>
<dbReference type="InterPro" id="IPR001471">
    <property type="entry name" value="AP2/ERF_dom"/>
</dbReference>
<dbReference type="InterPro" id="IPR036955">
    <property type="entry name" value="AP2/ERF_dom_sf"/>
</dbReference>
<dbReference type="InterPro" id="IPR016177">
    <property type="entry name" value="DNA-bd_dom_sf"/>
</dbReference>
<dbReference type="InterPro" id="IPR044808">
    <property type="entry name" value="ERF_plant"/>
</dbReference>
<dbReference type="PANTHER" id="PTHR31190">
    <property type="entry name" value="DNA-BINDING DOMAIN"/>
    <property type="match status" value="1"/>
</dbReference>
<dbReference type="PANTHER" id="PTHR31190:SF499">
    <property type="entry name" value="ETHYLENE-RESPONSIVE TRANSCRIPTION FACTOR ERF105"/>
    <property type="match status" value="1"/>
</dbReference>
<dbReference type="Pfam" id="PF00847">
    <property type="entry name" value="AP2"/>
    <property type="match status" value="1"/>
</dbReference>
<dbReference type="PRINTS" id="PR00367">
    <property type="entry name" value="ETHRSPELEMNT"/>
</dbReference>
<dbReference type="SMART" id="SM00380">
    <property type="entry name" value="AP2"/>
    <property type="match status" value="1"/>
</dbReference>
<dbReference type="SUPFAM" id="SSF54171">
    <property type="entry name" value="DNA-binding domain"/>
    <property type="match status" value="1"/>
</dbReference>
<dbReference type="PROSITE" id="PS51032">
    <property type="entry name" value="AP2_ERF"/>
    <property type="match status" value="1"/>
</dbReference>
<reference key="1">
    <citation type="journal article" date="1995" name="Plant Cell">
        <title>Ethylene-inducible DNA binding proteins that interact with an ethylene responsive element.</title>
        <authorList>
            <person name="Ohme-Takagi M."/>
            <person name="Shinshi H."/>
        </authorList>
    </citation>
    <scope>NUCLEOTIDE SEQUENCE [MRNA]</scope>
    <scope>FUNCTION</scope>
    <scope>INDUCTION</scope>
    <scope>TISSUE SPECIFICITY</scope>
    <source>
        <strain>cv. Bright Yellow 4</strain>
        <tissue>Leaf</tissue>
    </source>
</reference>
<reference key="2">
    <citation type="journal article" date="1998" name="Plant J.">
        <title>Immediate early induction of mRNAs for ethylene-responsive transcription factors in tobacco leaf strips after cutting.</title>
        <authorList>
            <person name="Suzuki K."/>
            <person name="Suzuki N."/>
            <person name="Ohme-Takagi M."/>
            <person name="Shinshi H."/>
        </authorList>
    </citation>
    <scope>FUNCTION</scope>
    <scope>INDUCTION</scope>
</reference>
<reference key="3">
    <citation type="journal article" date="1999" name="Plant J.">
        <title>Elicitor-responsive, ethylene-independent activation of GCC box-mediated transcription that is regulated by both protein phosphorylation and dephosphorylation in cultured tobacco cells.</title>
        <authorList>
            <person name="Yamamoto S."/>
            <person name="Suzuki K."/>
            <person name="Shinshi H."/>
        </authorList>
    </citation>
    <scope>FUNCTION</scope>
    <scope>INDUCTION</scope>
</reference>
<reference key="4">
    <citation type="journal article" date="2000" name="Plant J.">
        <title>Three ethylene-responsive transcription factors in tobacco with distinct transactivation functions.</title>
        <authorList>
            <person name="Ohta M."/>
            <person name="Ohme-Takagi M."/>
            <person name="Shinshi H."/>
        </authorList>
    </citation>
    <scope>FUNCTION</scope>
    <scope>SUBCELLULAR LOCATION</scope>
</reference>
<reference key="5">
    <citation type="journal article" date="2001" name="Biosci. Biotechnol. Biochem.">
        <title>Expression of PR-5d and ERF genes in cultured tobacco cells and their NaCl stress-response.</title>
        <authorList>
            <person name="Koyama T."/>
            <person name="Kitajima S."/>
            <person name="Sato F."/>
        </authorList>
    </citation>
    <scope>TISSUE SPECIFICITY</scope>
</reference>
<reference key="6">
    <citation type="journal article" date="2002" name="Plant Mol. Biol.">
        <title>Wounding activates immediate early transcription of genes for ERFs in tobacco plants.</title>
        <authorList>
            <person name="Nishiuchi T."/>
            <person name="Suzuki K."/>
            <person name="Kitajima S."/>
            <person name="Sato F."/>
            <person name="Shinshi H."/>
        </authorList>
    </citation>
    <scope>INDUCTION</scope>
</reference>
<keyword id="KW-0010">Activator</keyword>
<keyword id="KW-0238">DNA-binding</keyword>
<keyword id="KW-0936">Ethylene signaling pathway</keyword>
<keyword id="KW-0539">Nucleus</keyword>
<keyword id="KW-0611">Plant defense</keyword>
<keyword id="KW-1185">Reference proteome</keyword>
<keyword id="KW-0804">Transcription</keyword>
<keyword id="KW-0805">Transcription regulation</keyword>
<accession>Q40478</accession>
<organism>
    <name type="scientific">Nicotiana tabacum</name>
    <name type="common">Common tobacco</name>
    <dbReference type="NCBI Taxonomy" id="4097"/>
    <lineage>
        <taxon>Eukaryota</taxon>
        <taxon>Viridiplantae</taxon>
        <taxon>Streptophyta</taxon>
        <taxon>Embryophyta</taxon>
        <taxon>Tracheophyta</taxon>
        <taxon>Spermatophyta</taxon>
        <taxon>Magnoliopsida</taxon>
        <taxon>eudicotyledons</taxon>
        <taxon>Gunneridae</taxon>
        <taxon>Pentapetalae</taxon>
        <taxon>asterids</taxon>
        <taxon>lamiids</taxon>
        <taxon>Solanales</taxon>
        <taxon>Solanaceae</taxon>
        <taxon>Nicotianoideae</taxon>
        <taxon>Nicotianeae</taxon>
        <taxon>Nicotiana</taxon>
    </lineage>
</organism>
<protein>
    <recommendedName>
        <fullName>Ethylene-responsive transcription factor 5</fullName>
    </recommendedName>
    <alternativeName>
        <fullName>Ethylene-responsive element-binding factor 4</fullName>
        <shortName>EREBP-4</shortName>
    </alternativeName>
    <alternativeName>
        <fullName>Ethylene-responsive element-binding factor 5 homolog</fullName>
    </alternativeName>
    <alternativeName>
        <fullName>NtERF4</fullName>
    </alternativeName>
</protein>